<reference key="1">
    <citation type="journal article" date="2008" name="Genome Res.">
        <title>Comparative genome analysis of Salmonella enteritidis PT4 and Salmonella gallinarum 287/91 provides insights into evolutionary and host adaptation pathways.</title>
        <authorList>
            <person name="Thomson N.R."/>
            <person name="Clayton D.J."/>
            <person name="Windhorst D."/>
            <person name="Vernikos G."/>
            <person name="Davidson S."/>
            <person name="Churcher C."/>
            <person name="Quail M.A."/>
            <person name="Stevens M."/>
            <person name="Jones M.A."/>
            <person name="Watson M."/>
            <person name="Barron A."/>
            <person name="Layton A."/>
            <person name="Pickard D."/>
            <person name="Kingsley R.A."/>
            <person name="Bignell A."/>
            <person name="Clark L."/>
            <person name="Harris B."/>
            <person name="Ormond D."/>
            <person name="Abdellah Z."/>
            <person name="Brooks K."/>
            <person name="Cherevach I."/>
            <person name="Chillingworth T."/>
            <person name="Woodward J."/>
            <person name="Norberczak H."/>
            <person name="Lord A."/>
            <person name="Arrowsmith C."/>
            <person name="Jagels K."/>
            <person name="Moule S."/>
            <person name="Mungall K."/>
            <person name="Saunders M."/>
            <person name="Whitehead S."/>
            <person name="Chabalgoity J.A."/>
            <person name="Maskell D."/>
            <person name="Humphreys T."/>
            <person name="Roberts M."/>
            <person name="Barrow P.A."/>
            <person name="Dougan G."/>
            <person name="Parkhill J."/>
        </authorList>
    </citation>
    <scope>NUCLEOTIDE SEQUENCE [LARGE SCALE GENOMIC DNA]</scope>
    <source>
        <strain>P125109</strain>
    </source>
</reference>
<evidence type="ECO:0000255" key="1">
    <source>
        <dbReference type="HAMAP-Rule" id="MF_01034"/>
    </source>
</evidence>
<protein>
    <recommendedName>
        <fullName evidence="1">Putative D-alanyl-D-alanine carboxypeptidase</fullName>
        <ecNumber evidence="1">3.4.16.4</ecNumber>
    </recommendedName>
    <alternativeName>
        <fullName evidence="1">DD-carboxypeptidase</fullName>
        <shortName evidence="1">DD-CPase</shortName>
    </alternativeName>
</protein>
<comment type="catalytic activity">
    <reaction evidence="1">
        <text>Preferential cleavage: (Ac)2-L-Lys-D-Ala-|-D-Ala. Also transpeptidation of peptidyl-alanyl moieties that are N-acyl substituents of D-alanine.</text>
        <dbReference type="EC" id="3.4.16.4"/>
    </reaction>
</comment>
<comment type="subcellular location">
    <subcellularLocation>
        <location evidence="1">Cell inner membrane</location>
        <topology evidence="1">Single-pass membrane protein</topology>
    </subcellularLocation>
</comment>
<comment type="similarity">
    <text evidence="1">Belongs to the peptidase S12 family. YfeW subfamily.</text>
</comment>
<accession>B5R4I5</accession>
<name>YFEW_SALEP</name>
<feature type="chain" id="PRO_5000397869" description="Putative D-alanyl-D-alanine carboxypeptidase">
    <location>
        <begin position="1"/>
        <end position="432"/>
    </location>
</feature>
<feature type="transmembrane region" description="Helical; Signal-anchor" evidence="1">
    <location>
        <begin position="7"/>
        <end position="25"/>
    </location>
</feature>
<gene>
    <name evidence="1" type="primary">yfeW</name>
    <name type="ordered locus">SEN2457</name>
</gene>
<sequence length="432" mass="47705">MKFTLVATVLLTFSLSAFAVEYPVLTIASPDQVGFDSQKLHRLDGWIQNQIDAGYPSINLLVIKDNHIVLQKAWGYAKKYDGSTLLAHPIRATTNTMYDLASNTKMYATNFALQKLVYEGKIDVNDLVSKYIPGFKDMPGDKIKGKDKLRIIDILHHVAGFPADPQYPNKNVAGKLFSQSKSTTLEMIKKTPLEYQPGSKHIYSDVDYMILGFIIESITAMPLDRYVETTIYKPLGLKHTVFNPLMKGFTPPQIAATELHGNTRDGVIHFPNIRTNTLWGQVHDEKAWYSMGGVSGHAGLFSDTHDMAVLMQVMLNGGGYGNLKLFDDKTVAQFTRHSPEDATFGLGWRVNGNASMTPTFGVLASPQTYGHTGWTGTLTSIDPVNHMAIVILGNRPHSPVANPKVNPNVFVSGLLPAATYGWIVDQIYGSLK</sequence>
<keyword id="KW-0121">Carboxypeptidase</keyword>
<keyword id="KW-0997">Cell inner membrane</keyword>
<keyword id="KW-1003">Cell membrane</keyword>
<keyword id="KW-0378">Hydrolase</keyword>
<keyword id="KW-0472">Membrane</keyword>
<keyword id="KW-0645">Protease</keyword>
<keyword id="KW-0812">Transmembrane</keyword>
<keyword id="KW-1133">Transmembrane helix</keyword>
<dbReference type="EC" id="3.4.16.4" evidence="1"/>
<dbReference type="EMBL" id="AM933172">
    <property type="protein sequence ID" value="CAR34042.1"/>
    <property type="molecule type" value="Genomic_DNA"/>
</dbReference>
<dbReference type="SMR" id="B5R4I5"/>
<dbReference type="MEROPS" id="S12.A03"/>
<dbReference type="KEGG" id="set:SEN2457"/>
<dbReference type="HOGENOM" id="CLU_020027_1_2_6"/>
<dbReference type="Proteomes" id="UP000000613">
    <property type="component" value="Chromosome"/>
</dbReference>
<dbReference type="GO" id="GO:0005886">
    <property type="term" value="C:plasma membrane"/>
    <property type="evidence" value="ECO:0007669"/>
    <property type="project" value="UniProtKB-SubCell"/>
</dbReference>
<dbReference type="GO" id="GO:0009002">
    <property type="term" value="F:serine-type D-Ala-D-Ala carboxypeptidase activity"/>
    <property type="evidence" value="ECO:0007669"/>
    <property type="project" value="UniProtKB-UniRule"/>
</dbReference>
<dbReference type="GO" id="GO:0006508">
    <property type="term" value="P:proteolysis"/>
    <property type="evidence" value="ECO:0007669"/>
    <property type="project" value="UniProtKB-KW"/>
</dbReference>
<dbReference type="Gene3D" id="3.40.710.10">
    <property type="entry name" value="DD-peptidase/beta-lactamase superfamily"/>
    <property type="match status" value="1"/>
</dbReference>
<dbReference type="HAMAP" id="MF_01034">
    <property type="entry name" value="S12_YfeW"/>
    <property type="match status" value="1"/>
</dbReference>
<dbReference type="InterPro" id="IPR001466">
    <property type="entry name" value="Beta-lactam-related"/>
</dbReference>
<dbReference type="InterPro" id="IPR012338">
    <property type="entry name" value="Beta-lactam/transpept-like"/>
</dbReference>
<dbReference type="InterPro" id="IPR050789">
    <property type="entry name" value="Diverse_Enzym_Activities"/>
</dbReference>
<dbReference type="InterPro" id="IPR022849">
    <property type="entry name" value="Pept_S12_YfeW/YbbE-like"/>
</dbReference>
<dbReference type="NCBIfam" id="NF002968">
    <property type="entry name" value="PRK03642.1"/>
    <property type="match status" value="1"/>
</dbReference>
<dbReference type="PANTHER" id="PTHR43283">
    <property type="entry name" value="BETA-LACTAMASE-RELATED"/>
    <property type="match status" value="1"/>
</dbReference>
<dbReference type="PANTHER" id="PTHR43283:SF11">
    <property type="entry name" value="BETA-LACTAMASE-RELATED DOMAIN-CONTAINING PROTEIN"/>
    <property type="match status" value="1"/>
</dbReference>
<dbReference type="Pfam" id="PF00144">
    <property type="entry name" value="Beta-lactamase"/>
    <property type="match status" value="1"/>
</dbReference>
<dbReference type="SUPFAM" id="SSF56601">
    <property type="entry name" value="beta-lactamase/transpeptidase-like"/>
    <property type="match status" value="1"/>
</dbReference>
<organism>
    <name type="scientific">Salmonella enteritidis PT4 (strain P125109)</name>
    <dbReference type="NCBI Taxonomy" id="550537"/>
    <lineage>
        <taxon>Bacteria</taxon>
        <taxon>Pseudomonadati</taxon>
        <taxon>Pseudomonadota</taxon>
        <taxon>Gammaproteobacteria</taxon>
        <taxon>Enterobacterales</taxon>
        <taxon>Enterobacteriaceae</taxon>
        <taxon>Salmonella</taxon>
    </lineage>
</organism>
<proteinExistence type="inferred from homology"/>